<gene>
    <name type="primary">HSP83A</name>
</gene>
<organism>
    <name type="scientific">Ipomoea nil</name>
    <name type="common">Japanese morning glory</name>
    <name type="synonym">Pharbitis nil</name>
    <dbReference type="NCBI Taxonomy" id="35883"/>
    <lineage>
        <taxon>Eukaryota</taxon>
        <taxon>Viridiplantae</taxon>
        <taxon>Streptophyta</taxon>
        <taxon>Embryophyta</taxon>
        <taxon>Tracheophyta</taxon>
        <taxon>Spermatophyta</taxon>
        <taxon>Magnoliopsida</taxon>
        <taxon>eudicotyledons</taxon>
        <taxon>Gunneridae</taxon>
        <taxon>Pentapetalae</taxon>
        <taxon>asterids</taxon>
        <taxon>lamiids</taxon>
        <taxon>Solanales</taxon>
        <taxon>Convolvulaceae</taxon>
        <taxon>Ipomoeeae</taxon>
        <taxon>Ipomoea</taxon>
    </lineage>
</organism>
<sequence>MADVQMAEAETFAFQAEINQLLSLIINTFYSNKEIFLRELISNASDALDKIRFESLTDKSKLDAQPELFIRLVPDKTNKTLSIIDSGVGMAKADLVNNLGTIARSGTKEFMEALQAGADVSMIGQFGVGFYSAYLVAEKVIVTTKHNDDEQYIWESQAGGSFTVTRDVDGEQLGRGTKITLFLKEDQLEYLEERRIKDLVKKHSEFISYPIYLWTEKTTEKEISDDEDDEPKKEEEGDIEEVDEDKEKEGKKKKKIKEVSHEWQLINKQKPIWLRKPEEITKEEYASFYKSLTNDWEDHLAVKHFSVEGQLEFKAILFVPKRAPFDLFDTRKKMNNIKLYVRRVFIMDNCEELIPEYLGFVKGVVDSDDLPLNISREMLQQNKILKVIRKNLVKKCIEMFNEIAENKDDYNKFYEAFSKNLKLGIHEDSQNRAKLADLLRYYSTKSGDELTSLKDYVTRMKEGQKDIYYITGESKKAVENSPFLERLKKKGYEVLFMVDAIDEYAVGQLKEYDGKKLVSATKEGLKLEDDDEEEKKKREEKKKSFENLCKIIKDILGDKVEKVVVSDRIVDSPCCLVTGEYGWTANMERIMKAQALRDSSMSSYMSSKKTMEINPDNGIMEELRKRAEADKNDKSVKDLVLLLFETALLTSGFSLDDPNTFGARIHRMLKLGLSIDEEEAGDDADMPALEEEAGEESKMEEVD</sequence>
<protein>
    <recommendedName>
        <fullName>Heat shock protein 83</fullName>
    </recommendedName>
</protein>
<accession>P51819</accession>
<reference key="1">
    <citation type="journal article" date="1992" name="Plant Physiol.">
        <title>Structure and expression of a heat shock protein 83 (hsp83) gene of Pharbitis nil.</title>
        <authorList>
            <person name="Felsheim R.F."/>
            <person name="Das A."/>
        </authorList>
    </citation>
    <scope>NUCLEOTIDE SEQUENCE [GENOMIC DNA]</scope>
    <source>
        <tissue>Cotyledon</tissue>
    </source>
</reference>
<feature type="chain" id="PRO_0000062954" description="Heat shock protein 83">
    <location>
        <begin position="1"/>
        <end position="703"/>
    </location>
</feature>
<feature type="region of interest" description="Disordered" evidence="2">
    <location>
        <begin position="220"/>
        <end position="253"/>
    </location>
</feature>
<feature type="region of interest" description="Disordered" evidence="2">
    <location>
        <begin position="677"/>
        <end position="703"/>
    </location>
</feature>
<feature type="short sequence motif" description="TPR repeat-binding">
    <location>
        <begin position="699"/>
        <end position="703"/>
    </location>
</feature>
<feature type="compositionally biased region" description="Acidic residues" evidence="2">
    <location>
        <begin position="677"/>
        <end position="694"/>
    </location>
</feature>
<feature type="binding site" evidence="1">
    <location>
        <position position="43"/>
    </location>
    <ligand>
        <name>ATP</name>
        <dbReference type="ChEBI" id="CHEBI:30616"/>
    </ligand>
</feature>
<feature type="binding site" evidence="1">
    <location>
        <position position="85"/>
    </location>
    <ligand>
        <name>ATP</name>
        <dbReference type="ChEBI" id="CHEBI:30616"/>
    </ligand>
</feature>
<feature type="binding site" evidence="1">
    <location>
        <position position="130"/>
    </location>
    <ligand>
        <name>ATP</name>
        <dbReference type="ChEBI" id="CHEBI:30616"/>
    </ligand>
</feature>
<feature type="binding site" evidence="1">
    <location>
        <position position="376"/>
    </location>
    <ligand>
        <name>ATP</name>
        <dbReference type="ChEBI" id="CHEBI:30616"/>
    </ligand>
</feature>
<evidence type="ECO:0000250" key="1"/>
<evidence type="ECO:0000256" key="2">
    <source>
        <dbReference type="SAM" id="MobiDB-lite"/>
    </source>
</evidence>
<evidence type="ECO:0000305" key="3"/>
<proteinExistence type="evidence at transcript level"/>
<dbReference type="EMBL" id="M99431">
    <property type="protein sequence ID" value="AAA33748.1"/>
    <property type="molecule type" value="Genomic_DNA"/>
</dbReference>
<dbReference type="RefSeq" id="XP_019149680.1">
    <property type="nucleotide sequence ID" value="XM_019294135.1"/>
</dbReference>
<dbReference type="SMR" id="P51819"/>
<dbReference type="GeneID" id="109146489"/>
<dbReference type="KEGG" id="ini:109146489"/>
<dbReference type="OrthoDB" id="28737at2759"/>
<dbReference type="GO" id="GO:0005737">
    <property type="term" value="C:cytoplasm"/>
    <property type="evidence" value="ECO:0007669"/>
    <property type="project" value="UniProtKB-SubCell"/>
</dbReference>
<dbReference type="GO" id="GO:0005524">
    <property type="term" value="F:ATP binding"/>
    <property type="evidence" value="ECO:0007669"/>
    <property type="project" value="UniProtKB-KW"/>
</dbReference>
<dbReference type="GO" id="GO:0016887">
    <property type="term" value="F:ATP hydrolysis activity"/>
    <property type="evidence" value="ECO:0007669"/>
    <property type="project" value="InterPro"/>
</dbReference>
<dbReference type="GO" id="GO:0140662">
    <property type="term" value="F:ATP-dependent protein folding chaperone"/>
    <property type="evidence" value="ECO:0007669"/>
    <property type="project" value="InterPro"/>
</dbReference>
<dbReference type="GO" id="GO:0051082">
    <property type="term" value="F:unfolded protein binding"/>
    <property type="evidence" value="ECO:0007669"/>
    <property type="project" value="InterPro"/>
</dbReference>
<dbReference type="CDD" id="cd16927">
    <property type="entry name" value="HATPase_Hsp90-like"/>
    <property type="match status" value="1"/>
</dbReference>
<dbReference type="FunFam" id="3.30.565.10:FF:000012">
    <property type="entry name" value="Heat shock cognate protein"/>
    <property type="match status" value="1"/>
</dbReference>
<dbReference type="FunFam" id="1.20.120.790:FF:000001">
    <property type="entry name" value="Heat shock protein 90 alpha"/>
    <property type="match status" value="1"/>
</dbReference>
<dbReference type="FunFam" id="3.30.230.80:FF:000001">
    <property type="entry name" value="Heat shock protein 90 alpha"/>
    <property type="match status" value="1"/>
</dbReference>
<dbReference type="FunFam" id="3.40.50.11260:FF:000001">
    <property type="entry name" value="Heat shock protein 90 alpha"/>
    <property type="match status" value="1"/>
</dbReference>
<dbReference type="Gene3D" id="3.30.230.80">
    <property type="match status" value="1"/>
</dbReference>
<dbReference type="Gene3D" id="3.40.50.11260">
    <property type="match status" value="1"/>
</dbReference>
<dbReference type="Gene3D" id="1.20.120.790">
    <property type="entry name" value="Heat shock protein 90, C-terminal domain"/>
    <property type="match status" value="1"/>
</dbReference>
<dbReference type="Gene3D" id="3.30.565.10">
    <property type="entry name" value="Histidine kinase-like ATPase, C-terminal domain"/>
    <property type="match status" value="1"/>
</dbReference>
<dbReference type="HAMAP" id="MF_00505">
    <property type="entry name" value="HSP90"/>
    <property type="match status" value="1"/>
</dbReference>
<dbReference type="InterPro" id="IPR036890">
    <property type="entry name" value="HATPase_C_sf"/>
</dbReference>
<dbReference type="InterPro" id="IPR019805">
    <property type="entry name" value="Heat_shock_protein_90_CS"/>
</dbReference>
<dbReference type="InterPro" id="IPR037196">
    <property type="entry name" value="HSP90_C"/>
</dbReference>
<dbReference type="InterPro" id="IPR001404">
    <property type="entry name" value="Hsp90_fam"/>
</dbReference>
<dbReference type="InterPro" id="IPR020575">
    <property type="entry name" value="Hsp90_N"/>
</dbReference>
<dbReference type="InterPro" id="IPR020568">
    <property type="entry name" value="Ribosomal_Su5_D2-typ_SF"/>
</dbReference>
<dbReference type="NCBIfam" id="NF003555">
    <property type="entry name" value="PRK05218.1"/>
    <property type="match status" value="1"/>
</dbReference>
<dbReference type="PANTHER" id="PTHR11528">
    <property type="entry name" value="HEAT SHOCK PROTEIN 90 FAMILY MEMBER"/>
    <property type="match status" value="1"/>
</dbReference>
<dbReference type="Pfam" id="PF13589">
    <property type="entry name" value="HATPase_c_3"/>
    <property type="match status" value="1"/>
</dbReference>
<dbReference type="Pfam" id="PF00183">
    <property type="entry name" value="HSP90"/>
    <property type="match status" value="1"/>
</dbReference>
<dbReference type="PIRSF" id="PIRSF002583">
    <property type="entry name" value="Hsp90"/>
    <property type="match status" value="1"/>
</dbReference>
<dbReference type="PRINTS" id="PR00775">
    <property type="entry name" value="HEATSHOCK90"/>
</dbReference>
<dbReference type="SMART" id="SM00387">
    <property type="entry name" value="HATPase_c"/>
    <property type="match status" value="1"/>
</dbReference>
<dbReference type="SUPFAM" id="SSF55874">
    <property type="entry name" value="ATPase domain of HSP90 chaperone/DNA topoisomerase II/histidine kinase"/>
    <property type="match status" value="1"/>
</dbReference>
<dbReference type="SUPFAM" id="SSF110942">
    <property type="entry name" value="HSP90 C-terminal domain"/>
    <property type="match status" value="1"/>
</dbReference>
<dbReference type="SUPFAM" id="SSF54211">
    <property type="entry name" value="Ribosomal protein S5 domain 2-like"/>
    <property type="match status" value="1"/>
</dbReference>
<dbReference type="PROSITE" id="PS00298">
    <property type="entry name" value="HSP90"/>
    <property type="match status" value="1"/>
</dbReference>
<keyword id="KW-0067">ATP-binding</keyword>
<keyword id="KW-0143">Chaperone</keyword>
<keyword id="KW-0963">Cytoplasm</keyword>
<keyword id="KW-0547">Nucleotide-binding</keyword>
<keyword id="KW-0346">Stress response</keyword>
<name>HSP83_IPONI</name>
<comment type="function">
    <text evidence="1">Molecular chaperone that promotes the maturation, structural maintenance and proper regulation of specific target proteins involved for instance in cell cycle control and signal transduction. Undergoes a functional cycle that is linked to its ATPase activity. This cycle probably induces conformational changes in the client proteins, thereby causing their activation. Interacts dynamically with various co-chaperones that modulate its substrate recognition, ATPase cycle and chaperone function (By similarity).</text>
</comment>
<comment type="subunit">
    <text evidence="1">Homodimer.</text>
</comment>
<comment type="subcellular location">
    <subcellularLocation>
        <location evidence="3">Cytoplasm</location>
    </subcellularLocation>
</comment>
<comment type="induction">
    <text>By heat shock and light. This heat shock protein is induced by light only after a prolonged dark period or vice versa.</text>
</comment>
<comment type="domain">
    <text evidence="1">The TPR repeat-binding motif mediates interaction with TPR repeat-containing proteins.</text>
</comment>
<comment type="similarity">
    <text evidence="3">Belongs to the heat shock protein 90 family.</text>
</comment>